<evidence type="ECO:0000305" key="1"/>
<organism>
    <name type="scientific">Oryza sativa</name>
    <name type="common">Rice</name>
    <dbReference type="NCBI Taxonomy" id="4530"/>
    <lineage>
        <taxon>Eukaryota</taxon>
        <taxon>Viridiplantae</taxon>
        <taxon>Streptophyta</taxon>
        <taxon>Embryophyta</taxon>
        <taxon>Tracheophyta</taxon>
        <taxon>Spermatophyta</taxon>
        <taxon>Magnoliopsida</taxon>
        <taxon>Liliopsida</taxon>
        <taxon>Poales</taxon>
        <taxon>Poaceae</taxon>
        <taxon>BOP clade</taxon>
        <taxon>Oryzoideae</taxon>
        <taxon>Oryzeae</taxon>
        <taxon>Oryzinae</taxon>
        <taxon>Oryza</taxon>
    </lineage>
</organism>
<feature type="chain" id="PRO_0000288622" description="Uncharacterized protein ycf72">
    <location>
        <begin position="1"/>
        <end position="137"/>
    </location>
</feature>
<geneLocation type="chloroplast"/>
<accession>P0C308</accession>
<protein>
    <recommendedName>
        <fullName>Uncharacterized protein ycf72</fullName>
    </recommendedName>
</protein>
<gene>
    <name type="primary">ycf72-1</name>
</gene>
<gene>
    <name type="primary">ycf72-2</name>
</gene>
<name>YCF72_ORYSA</name>
<dbReference type="EMBL" id="AY522331">
    <property type="status" value="NOT_ANNOTATED_CDS"/>
    <property type="molecule type" value="Genomic_DNA"/>
</dbReference>
<dbReference type="GO" id="GO:0009507">
    <property type="term" value="C:chloroplast"/>
    <property type="evidence" value="ECO:0007669"/>
    <property type="project" value="UniProtKB-SubCell"/>
</dbReference>
<dbReference type="GO" id="GO:0009536">
    <property type="term" value="C:plastid"/>
    <property type="evidence" value="ECO:0000305"/>
    <property type="project" value="Gramene"/>
</dbReference>
<dbReference type="InterPro" id="IPR038860">
    <property type="entry name" value="YCF72"/>
</dbReference>
<dbReference type="PANTHER" id="PTHR37377">
    <property type="entry name" value="RIBULOSE BISPHOSPHATE CARBOXYLASE LARGE CHAIN"/>
    <property type="match status" value="1"/>
</dbReference>
<dbReference type="PANTHER" id="PTHR37377:SF2">
    <property type="entry name" value="SMALL RIBOSOMAL SUBUNIT PROTEIN US2C"/>
    <property type="match status" value="1"/>
</dbReference>
<reference key="1">
    <citation type="journal article" date="2004" name="Plant Physiol.">
        <title>A comparison of rice chloroplast genomes.</title>
        <authorList>
            <person name="Tang J."/>
            <person name="Xia H."/>
            <person name="Cao M."/>
            <person name="Zhang X."/>
            <person name="Zeng W."/>
            <person name="Hu S."/>
            <person name="Tong W."/>
            <person name="Wang J."/>
            <person name="Wang J."/>
            <person name="Yu J."/>
            <person name="Yang H."/>
            <person name="Zhu L."/>
        </authorList>
    </citation>
    <scope>NUCLEOTIDE SEQUENCE [LARGE SCALE GENOMIC DNA]</scope>
    <source>
        <strain>cv. PA64s</strain>
    </source>
</reference>
<proteinExistence type="inferred from homology"/>
<comment type="subcellular location">
    <subcellularLocation>
        <location>Plastid</location>
        <location>Chloroplast</location>
    </subcellularLocation>
</comment>
<comment type="similarity">
    <text evidence="1">Belongs to the ycf72 family.</text>
</comment>
<sequence>MGAFPSPPPWGWSTGFITTPLTTGRLPSQHLDPALPKLFWFTPTLPTCPTVAKQFWDTKRTSPDGNLKVADLPSFAISFATAPAALANCPPLPRVISMLCMAVPKGISVEVDSSFLSKNPFPNCTSFFQSIRLSRCI</sequence>
<keyword id="KW-0150">Chloroplast</keyword>
<keyword id="KW-0934">Plastid</keyword>